<protein>
    <recommendedName>
        <fullName>Putative pyridoxal phosphate-dependent acyltransferase</fullName>
        <ecNumber>2.3.1.-</ecNumber>
    </recommendedName>
</protein>
<evidence type="ECO:0000250" key="1"/>
<evidence type="ECO:0000305" key="2"/>
<accession>Q81I05</accession>
<name>PPAT_BACCR</name>
<organism>
    <name type="scientific">Bacillus cereus (strain ATCC 14579 / DSM 31 / CCUG 7414 / JCM 2152 / NBRC 15305 / NCIMB 9373 / NCTC 2599 / NRRL B-3711)</name>
    <dbReference type="NCBI Taxonomy" id="226900"/>
    <lineage>
        <taxon>Bacteria</taxon>
        <taxon>Bacillati</taxon>
        <taxon>Bacillota</taxon>
        <taxon>Bacilli</taxon>
        <taxon>Bacillales</taxon>
        <taxon>Bacillaceae</taxon>
        <taxon>Bacillus</taxon>
        <taxon>Bacillus cereus group</taxon>
    </lineage>
</organism>
<proteinExistence type="inferred from homology"/>
<feature type="chain" id="PRO_0000163834" description="Putative pyridoxal phosphate-dependent acyltransferase">
    <location>
        <begin position="1"/>
        <end position="396"/>
    </location>
</feature>
<feature type="binding site" evidence="1">
    <location>
        <begin position="111"/>
        <end position="112"/>
    </location>
    <ligand>
        <name>pyridoxal 5'-phosphate</name>
        <dbReference type="ChEBI" id="CHEBI:597326"/>
    </ligand>
</feature>
<feature type="binding site" evidence="1">
    <location>
        <position position="136"/>
    </location>
    <ligand>
        <name>substrate</name>
    </ligand>
</feature>
<feature type="binding site" evidence="1">
    <location>
        <position position="186"/>
    </location>
    <ligand>
        <name>pyridoxal 5'-phosphate</name>
        <dbReference type="ChEBI" id="CHEBI:597326"/>
    </ligand>
</feature>
<feature type="binding site" evidence="1">
    <location>
        <begin position="211"/>
        <end position="214"/>
    </location>
    <ligand>
        <name>pyridoxal 5'-phosphate</name>
        <dbReference type="ChEBI" id="CHEBI:597326"/>
    </ligand>
</feature>
<feature type="binding site" evidence="1">
    <location>
        <begin position="241"/>
        <end position="244"/>
    </location>
    <ligand>
        <name>pyridoxal 5'-phosphate</name>
        <dbReference type="ChEBI" id="CHEBI:597326"/>
    </ligand>
</feature>
<feature type="binding site" evidence="1">
    <location>
        <position position="358"/>
    </location>
    <ligand>
        <name>substrate</name>
    </ligand>
</feature>
<feature type="modified residue" description="N6-(pyridoxal phosphate)lysine" evidence="2">
    <location>
        <position position="244"/>
    </location>
</feature>
<dbReference type="EC" id="2.3.1.-"/>
<dbReference type="EMBL" id="AE016877">
    <property type="protein sequence ID" value="AAP07638.1"/>
    <property type="molecule type" value="Genomic_DNA"/>
</dbReference>
<dbReference type="RefSeq" id="NP_830437.1">
    <property type="nucleotide sequence ID" value="NC_004722.1"/>
</dbReference>
<dbReference type="RefSeq" id="WP_000095905.1">
    <property type="nucleotide sequence ID" value="NZ_CP138336.1"/>
</dbReference>
<dbReference type="SMR" id="Q81I05"/>
<dbReference type="STRING" id="226900.BC_0621"/>
<dbReference type="KEGG" id="bce:BC0621"/>
<dbReference type="PATRIC" id="fig|226900.8.peg.580"/>
<dbReference type="HOGENOM" id="CLU_015846_11_0_9"/>
<dbReference type="OrthoDB" id="9807157at2"/>
<dbReference type="Proteomes" id="UP000001417">
    <property type="component" value="Chromosome"/>
</dbReference>
<dbReference type="GO" id="GO:0030170">
    <property type="term" value="F:pyridoxal phosphate binding"/>
    <property type="evidence" value="ECO:0007669"/>
    <property type="project" value="InterPro"/>
</dbReference>
<dbReference type="GO" id="GO:0016740">
    <property type="term" value="F:transferase activity"/>
    <property type="evidence" value="ECO:0007669"/>
    <property type="project" value="UniProtKB-KW"/>
</dbReference>
<dbReference type="GO" id="GO:0009058">
    <property type="term" value="P:biosynthetic process"/>
    <property type="evidence" value="ECO:0007669"/>
    <property type="project" value="InterPro"/>
</dbReference>
<dbReference type="CDD" id="cd06454">
    <property type="entry name" value="KBL_like"/>
    <property type="match status" value="1"/>
</dbReference>
<dbReference type="FunFam" id="3.40.640.10:FF:000006">
    <property type="entry name" value="5-aminolevulinate synthase, mitochondrial"/>
    <property type="match status" value="1"/>
</dbReference>
<dbReference type="Gene3D" id="3.90.1150.10">
    <property type="entry name" value="Aspartate Aminotransferase, domain 1"/>
    <property type="match status" value="1"/>
</dbReference>
<dbReference type="Gene3D" id="3.40.640.10">
    <property type="entry name" value="Type I PLP-dependent aspartate aminotransferase-like (Major domain)"/>
    <property type="match status" value="1"/>
</dbReference>
<dbReference type="InterPro" id="IPR001917">
    <property type="entry name" value="Aminotrans_II_pyridoxalP_BS"/>
</dbReference>
<dbReference type="InterPro" id="IPR004839">
    <property type="entry name" value="Aminotransferase_I/II_large"/>
</dbReference>
<dbReference type="InterPro" id="IPR050087">
    <property type="entry name" value="AON_synthase_class-II"/>
</dbReference>
<dbReference type="InterPro" id="IPR010962">
    <property type="entry name" value="AONS_Archaea/Firmicutes"/>
</dbReference>
<dbReference type="InterPro" id="IPR015424">
    <property type="entry name" value="PyrdxlP-dep_Trfase"/>
</dbReference>
<dbReference type="InterPro" id="IPR015421">
    <property type="entry name" value="PyrdxlP-dep_Trfase_major"/>
</dbReference>
<dbReference type="InterPro" id="IPR015422">
    <property type="entry name" value="PyrdxlP-dep_Trfase_small"/>
</dbReference>
<dbReference type="NCBIfam" id="TIGR01825">
    <property type="entry name" value="gly_Cac_T_rel"/>
    <property type="match status" value="1"/>
</dbReference>
<dbReference type="NCBIfam" id="NF005394">
    <property type="entry name" value="PRK06939.1"/>
    <property type="match status" value="1"/>
</dbReference>
<dbReference type="PANTHER" id="PTHR13693">
    <property type="entry name" value="CLASS II AMINOTRANSFERASE/8-AMINO-7-OXONONANOATE SYNTHASE"/>
    <property type="match status" value="1"/>
</dbReference>
<dbReference type="PANTHER" id="PTHR13693:SF3">
    <property type="entry name" value="LD36009P"/>
    <property type="match status" value="1"/>
</dbReference>
<dbReference type="Pfam" id="PF00155">
    <property type="entry name" value="Aminotran_1_2"/>
    <property type="match status" value="1"/>
</dbReference>
<dbReference type="SUPFAM" id="SSF53383">
    <property type="entry name" value="PLP-dependent transferases"/>
    <property type="match status" value="1"/>
</dbReference>
<dbReference type="PROSITE" id="PS00599">
    <property type="entry name" value="AA_TRANSFER_CLASS_2"/>
    <property type="match status" value="1"/>
</dbReference>
<reference key="1">
    <citation type="journal article" date="2003" name="Nature">
        <title>Genome sequence of Bacillus cereus and comparative analysis with Bacillus anthracis.</title>
        <authorList>
            <person name="Ivanova N."/>
            <person name="Sorokin A."/>
            <person name="Anderson I."/>
            <person name="Galleron N."/>
            <person name="Candelon B."/>
            <person name="Kapatral V."/>
            <person name="Bhattacharyya A."/>
            <person name="Reznik G."/>
            <person name="Mikhailova N."/>
            <person name="Lapidus A."/>
            <person name="Chu L."/>
            <person name="Mazur M."/>
            <person name="Goltsman E."/>
            <person name="Larsen N."/>
            <person name="D'Souza M."/>
            <person name="Walunas T."/>
            <person name="Grechkin Y."/>
            <person name="Pusch G."/>
            <person name="Haselkorn R."/>
            <person name="Fonstein M."/>
            <person name="Ehrlich S.D."/>
            <person name="Overbeek R."/>
            <person name="Kyrpides N.C."/>
        </authorList>
    </citation>
    <scope>NUCLEOTIDE SEQUENCE [LARGE SCALE GENOMIC DNA]</scope>
    <source>
        <strain>ATCC 14579 / DSM 31 / CCUG 7414 / JCM 2152 / NBRC 15305 / NCIMB 9373 / NCTC 2599 / NRRL B-3711</strain>
    </source>
</reference>
<keyword id="KW-0663">Pyridoxal phosphate</keyword>
<keyword id="KW-1185">Reference proteome</keyword>
<keyword id="KW-0808">Transferase</keyword>
<comment type="cofactor">
    <cofactor evidence="1">
        <name>pyridoxal 5'-phosphate</name>
        <dbReference type="ChEBI" id="CHEBI:597326"/>
    </cofactor>
</comment>
<comment type="subunit">
    <text evidence="1">Homodimer.</text>
</comment>
<comment type="similarity">
    <text evidence="2">Belongs to the class-II pyridoxal-phosphate-dependent aminotransferase family.</text>
</comment>
<gene>
    <name type="ordered locus">BC_0621</name>
</gene>
<sequence length="396" mass="43063">MSSKTLAKFLEENLEDLKSKGLYNVIDPLESSNGPIITIGGKEYINLSSNNYLGLATDSRLQEAAIGAIHKYGVGAGAVRTINGTLDLHIKLEETIAKFKHTEAAIAYQSGFNCNMAAISAVMDKNDAILSDELNHASIIDGSRLSKAKIIVYKHSDMEDLRQKAIAAKESGLYNKLMVITDGVFSMDGDVAKLPEIVEIAEELDLMTYVDDAHGSGVLGKGAGTVKHFGLSDKVDFQIGTLSKAIGVIGGYVAGKQNLIDWLKVRSRPFLFSTALTPADAAACMRSIEILMESTELHDRLWENGRYLKQGLKELGFNIGESETPITPCIIGDEVLTQEFSKRLNEEGVYAKSIVFPTVAKGTGRVRNMPTAAHTKEMLDEAILKYEKVGKEMGII</sequence>